<sequence length="359" mass="40613">MFERLDLMEAKYDELTQALASPEIVNDSAKYQKTAKAHAELTQLVQKYREYKDLTRGIKDSRQMVAEETDAEMKAYAQQELTELEQRLHAVEEDLKVLLLPRDPNDDKNIIVEIRAGTGGDEASLFAAELFRMYNRYAETQRWKVEVLSSSESGVGGLKEVIAIIEGRGAYSKLKYESGVHRVQRVPQTETQGRVHTSAVTVAVLPEAEEVDIKIEAKDIRIDTFCSSGPGGQSVNTTYSAVRITHLPTNTVVSCQDEKSQIKNREKGMRVLRARLYEVEQQKQADALAKERKQQVGSGDRSEKIRTYNFPQNRVTDHRIGYTVHQLSEFMDGKINALIEALTTHYQAEKLKEQTTAVS</sequence>
<protein>
    <recommendedName>
        <fullName evidence="1">Peptide chain release factor 1</fullName>
        <shortName evidence="1">RF-1</shortName>
    </recommendedName>
</protein>
<feature type="chain" id="PRO_0000263226" description="Peptide chain release factor 1">
    <location>
        <begin position="1"/>
        <end position="359"/>
    </location>
</feature>
<feature type="modified residue" description="N5-methylglutamine" evidence="1">
    <location>
        <position position="233"/>
    </location>
</feature>
<dbReference type="EMBL" id="CP000360">
    <property type="protein sequence ID" value="ABF43472.1"/>
    <property type="molecule type" value="Genomic_DNA"/>
</dbReference>
<dbReference type="RefSeq" id="WP_011525269.1">
    <property type="nucleotide sequence ID" value="NC_008009.1"/>
</dbReference>
<dbReference type="SMR" id="Q1II28"/>
<dbReference type="STRING" id="204669.Acid345_4472"/>
<dbReference type="EnsemblBacteria" id="ABF43472">
    <property type="protein sequence ID" value="ABF43472"/>
    <property type="gene ID" value="Acid345_4472"/>
</dbReference>
<dbReference type="KEGG" id="aba:Acid345_4472"/>
<dbReference type="eggNOG" id="COG0216">
    <property type="taxonomic scope" value="Bacteria"/>
</dbReference>
<dbReference type="HOGENOM" id="CLU_036856_0_1_0"/>
<dbReference type="OrthoDB" id="9806673at2"/>
<dbReference type="Proteomes" id="UP000002432">
    <property type="component" value="Chromosome"/>
</dbReference>
<dbReference type="GO" id="GO:0005737">
    <property type="term" value="C:cytoplasm"/>
    <property type="evidence" value="ECO:0007669"/>
    <property type="project" value="UniProtKB-SubCell"/>
</dbReference>
<dbReference type="GO" id="GO:0016149">
    <property type="term" value="F:translation release factor activity, codon specific"/>
    <property type="evidence" value="ECO:0007669"/>
    <property type="project" value="UniProtKB-UniRule"/>
</dbReference>
<dbReference type="FunFam" id="3.30.160.20:FF:000004">
    <property type="entry name" value="Peptide chain release factor 1"/>
    <property type="match status" value="1"/>
</dbReference>
<dbReference type="FunFam" id="3.30.70.1660:FF:000002">
    <property type="entry name" value="Peptide chain release factor 1"/>
    <property type="match status" value="1"/>
</dbReference>
<dbReference type="FunFam" id="3.30.70.1660:FF:000004">
    <property type="entry name" value="Peptide chain release factor 1"/>
    <property type="match status" value="1"/>
</dbReference>
<dbReference type="Gene3D" id="3.30.160.20">
    <property type="match status" value="1"/>
</dbReference>
<dbReference type="Gene3D" id="3.30.70.1660">
    <property type="match status" value="1"/>
</dbReference>
<dbReference type="Gene3D" id="6.10.140.1950">
    <property type="match status" value="1"/>
</dbReference>
<dbReference type="HAMAP" id="MF_00093">
    <property type="entry name" value="Rel_fac_1"/>
    <property type="match status" value="1"/>
</dbReference>
<dbReference type="InterPro" id="IPR005139">
    <property type="entry name" value="PCRF"/>
</dbReference>
<dbReference type="InterPro" id="IPR000352">
    <property type="entry name" value="Pep_chain_release_fac_I"/>
</dbReference>
<dbReference type="InterPro" id="IPR045853">
    <property type="entry name" value="Pep_chain_release_fac_I_sf"/>
</dbReference>
<dbReference type="InterPro" id="IPR050057">
    <property type="entry name" value="Prokaryotic/Mito_RF"/>
</dbReference>
<dbReference type="InterPro" id="IPR004373">
    <property type="entry name" value="RF-1"/>
</dbReference>
<dbReference type="NCBIfam" id="TIGR00019">
    <property type="entry name" value="prfA"/>
    <property type="match status" value="1"/>
</dbReference>
<dbReference type="NCBIfam" id="NF001859">
    <property type="entry name" value="PRK00591.1"/>
    <property type="match status" value="1"/>
</dbReference>
<dbReference type="PANTHER" id="PTHR43804">
    <property type="entry name" value="LD18447P"/>
    <property type="match status" value="1"/>
</dbReference>
<dbReference type="PANTHER" id="PTHR43804:SF7">
    <property type="entry name" value="LD18447P"/>
    <property type="match status" value="1"/>
</dbReference>
<dbReference type="Pfam" id="PF03462">
    <property type="entry name" value="PCRF"/>
    <property type="match status" value="1"/>
</dbReference>
<dbReference type="Pfam" id="PF00472">
    <property type="entry name" value="RF-1"/>
    <property type="match status" value="1"/>
</dbReference>
<dbReference type="SMART" id="SM00937">
    <property type="entry name" value="PCRF"/>
    <property type="match status" value="1"/>
</dbReference>
<dbReference type="SUPFAM" id="SSF75620">
    <property type="entry name" value="Release factor"/>
    <property type="match status" value="1"/>
</dbReference>
<gene>
    <name evidence="1" type="primary">prfA</name>
    <name type="ordered locus">Acid345_4472</name>
</gene>
<accession>Q1II28</accession>
<evidence type="ECO:0000255" key="1">
    <source>
        <dbReference type="HAMAP-Rule" id="MF_00093"/>
    </source>
</evidence>
<reference key="1">
    <citation type="journal article" date="2009" name="Appl. Environ. Microbiol.">
        <title>Three genomes from the phylum Acidobacteria provide insight into the lifestyles of these microorganisms in soils.</title>
        <authorList>
            <person name="Ward N.L."/>
            <person name="Challacombe J.F."/>
            <person name="Janssen P.H."/>
            <person name="Henrissat B."/>
            <person name="Coutinho P.M."/>
            <person name="Wu M."/>
            <person name="Xie G."/>
            <person name="Haft D.H."/>
            <person name="Sait M."/>
            <person name="Badger J."/>
            <person name="Barabote R.D."/>
            <person name="Bradley B."/>
            <person name="Brettin T.S."/>
            <person name="Brinkac L.M."/>
            <person name="Bruce D."/>
            <person name="Creasy T."/>
            <person name="Daugherty S.C."/>
            <person name="Davidsen T.M."/>
            <person name="DeBoy R.T."/>
            <person name="Detter J.C."/>
            <person name="Dodson R.J."/>
            <person name="Durkin A.S."/>
            <person name="Ganapathy A."/>
            <person name="Gwinn-Giglio M."/>
            <person name="Han C.S."/>
            <person name="Khouri H."/>
            <person name="Kiss H."/>
            <person name="Kothari S.P."/>
            <person name="Madupu R."/>
            <person name="Nelson K.E."/>
            <person name="Nelson W.C."/>
            <person name="Paulsen I."/>
            <person name="Penn K."/>
            <person name="Ren Q."/>
            <person name="Rosovitz M.J."/>
            <person name="Selengut J.D."/>
            <person name="Shrivastava S."/>
            <person name="Sullivan S.A."/>
            <person name="Tapia R."/>
            <person name="Thompson L.S."/>
            <person name="Watkins K.L."/>
            <person name="Yang Q."/>
            <person name="Yu C."/>
            <person name="Zafar N."/>
            <person name="Zhou L."/>
            <person name="Kuske C.R."/>
        </authorList>
    </citation>
    <scope>NUCLEOTIDE SEQUENCE [LARGE SCALE GENOMIC DNA]</scope>
    <source>
        <strain>Ellin345</strain>
    </source>
</reference>
<organism>
    <name type="scientific">Koribacter versatilis (strain Ellin345)</name>
    <dbReference type="NCBI Taxonomy" id="204669"/>
    <lineage>
        <taxon>Bacteria</taxon>
        <taxon>Pseudomonadati</taxon>
        <taxon>Acidobacteriota</taxon>
        <taxon>Terriglobia</taxon>
        <taxon>Terriglobales</taxon>
        <taxon>Candidatus Korobacteraceae</taxon>
        <taxon>Candidatus Korobacter</taxon>
    </lineage>
</organism>
<name>RF1_KORVE</name>
<keyword id="KW-0963">Cytoplasm</keyword>
<keyword id="KW-0488">Methylation</keyword>
<keyword id="KW-0648">Protein biosynthesis</keyword>
<keyword id="KW-1185">Reference proteome</keyword>
<comment type="function">
    <text evidence="1">Peptide chain release factor 1 directs the termination of translation in response to the peptide chain termination codons UAG and UAA.</text>
</comment>
<comment type="subcellular location">
    <subcellularLocation>
        <location evidence="1">Cytoplasm</location>
    </subcellularLocation>
</comment>
<comment type="PTM">
    <text evidence="1">Methylated by PrmC. Methylation increases the termination efficiency of RF1.</text>
</comment>
<comment type="similarity">
    <text evidence="1">Belongs to the prokaryotic/mitochondrial release factor family.</text>
</comment>
<proteinExistence type="inferred from homology"/>